<evidence type="ECO:0000250" key="1">
    <source>
        <dbReference type="UniProtKB" id="P04553"/>
    </source>
</evidence>
<evidence type="ECO:0000250" key="2">
    <source>
        <dbReference type="UniProtKB" id="P60008"/>
    </source>
</evidence>
<evidence type="ECO:0000255" key="3">
    <source>
        <dbReference type="PROSITE-ProRule" id="PRU00837"/>
    </source>
</evidence>
<evidence type="ECO:0000256" key="4">
    <source>
        <dbReference type="SAM" id="MobiDB-lite"/>
    </source>
</evidence>
<evidence type="ECO:0000269" key="5">
    <source>
    </source>
</evidence>
<evidence type="ECO:0000305" key="6"/>
<evidence type="ECO:0000312" key="7">
    <source>
        <dbReference type="EMBL" id="AAO16249.1"/>
    </source>
</evidence>
<dbReference type="EMBL" id="AY182775">
    <property type="protein sequence ID" value="AAO16249.1"/>
    <property type="molecule type" value="Genomic_DNA"/>
</dbReference>
<dbReference type="SMR" id="Q86QH9"/>
<dbReference type="GO" id="GO:0000786">
    <property type="term" value="C:nucleosome"/>
    <property type="evidence" value="ECO:0007669"/>
    <property type="project" value="UniProtKB-KW"/>
</dbReference>
<dbReference type="GO" id="GO:0005634">
    <property type="term" value="C:nucleus"/>
    <property type="evidence" value="ECO:0007669"/>
    <property type="project" value="UniProtKB-SubCell"/>
</dbReference>
<dbReference type="GO" id="GO:0003677">
    <property type="term" value="F:DNA binding"/>
    <property type="evidence" value="ECO:0007669"/>
    <property type="project" value="UniProtKB-KW"/>
</dbReference>
<dbReference type="GO" id="GO:0030154">
    <property type="term" value="P:cell differentiation"/>
    <property type="evidence" value="ECO:0007669"/>
    <property type="project" value="UniProtKB-KW"/>
</dbReference>
<dbReference type="GO" id="GO:0030261">
    <property type="term" value="P:chromosome condensation"/>
    <property type="evidence" value="ECO:0007669"/>
    <property type="project" value="UniProtKB-KW"/>
</dbReference>
<dbReference type="GO" id="GO:0006334">
    <property type="term" value="P:nucleosome assembly"/>
    <property type="evidence" value="ECO:0007669"/>
    <property type="project" value="InterPro"/>
</dbReference>
<dbReference type="GO" id="GO:0007283">
    <property type="term" value="P:spermatogenesis"/>
    <property type="evidence" value="ECO:0007669"/>
    <property type="project" value="UniProtKB-KW"/>
</dbReference>
<dbReference type="CDD" id="cd00073">
    <property type="entry name" value="H15"/>
    <property type="match status" value="1"/>
</dbReference>
<dbReference type="Gene3D" id="1.10.10.10">
    <property type="entry name" value="Winged helix-like DNA-binding domain superfamily/Winged helix DNA-binding domain"/>
    <property type="match status" value="1"/>
</dbReference>
<dbReference type="InterPro" id="IPR005818">
    <property type="entry name" value="Histone_H1/H5_H15"/>
</dbReference>
<dbReference type="InterPro" id="IPR036388">
    <property type="entry name" value="WH-like_DNA-bd_sf"/>
</dbReference>
<dbReference type="InterPro" id="IPR036390">
    <property type="entry name" value="WH_DNA-bd_sf"/>
</dbReference>
<dbReference type="Pfam" id="PF00538">
    <property type="entry name" value="Linker_histone"/>
    <property type="match status" value="1"/>
</dbReference>
<dbReference type="SMART" id="SM00526">
    <property type="entry name" value="H15"/>
    <property type="match status" value="1"/>
</dbReference>
<dbReference type="SUPFAM" id="SSF46785">
    <property type="entry name" value="Winged helix' DNA-binding domain"/>
    <property type="match status" value="1"/>
</dbReference>
<dbReference type="PROSITE" id="PS51504">
    <property type="entry name" value="H15"/>
    <property type="match status" value="1"/>
</dbReference>
<keyword id="KW-0158">Chromosome</keyword>
<keyword id="KW-0217">Developmental protein</keyword>
<keyword id="KW-0221">Differentiation</keyword>
<keyword id="KW-0226">DNA condensation</keyword>
<keyword id="KW-0238">DNA-binding</keyword>
<keyword id="KW-0544">Nucleosome core</keyword>
<keyword id="KW-0539">Nucleus</keyword>
<keyword id="KW-0744">Spermatogenesis</keyword>
<sequence>MPSPSRKSRSRSRSRSKSPKRSPAKKARKTPKKPRAAGGAKKPTTLSMIVAAITAMKNRKGSSVQAIRKYILANNKGINTSHLGSAMKLAFAKGLKSGVLVRPKTSAGASGATGSFRVGKAPASPKKAKKAKSPKKKSSKKSKNKSNNAKAKKSPKKKADSNGIRYQAYRYRRPRGGARYPFRYQAYRYRRPRGGPGTQFAL</sequence>
<feature type="chain" id="PRO_0000013160" description="Sperm-specific protein OE1">
    <location>
        <begin position="1"/>
        <end position="148"/>
    </location>
</feature>
<feature type="chain" id="PRO_0000013161" description="Sperm-specific protein OE3">
    <location>
        <begin position="149"/>
        <end position="202"/>
    </location>
</feature>
<feature type="domain" description="H15" evidence="3">
    <location>
        <begin position="41"/>
        <end position="120"/>
    </location>
</feature>
<feature type="region of interest" description="Disordered" evidence="4">
    <location>
        <begin position="1"/>
        <end position="46"/>
    </location>
</feature>
<feature type="region of interest" description="Disordered" evidence="4">
    <location>
        <begin position="104"/>
        <end position="202"/>
    </location>
</feature>
<feature type="compositionally biased region" description="Basic residues" evidence="4">
    <location>
        <begin position="1"/>
        <end position="35"/>
    </location>
</feature>
<feature type="compositionally biased region" description="Basic residues" evidence="4">
    <location>
        <begin position="126"/>
        <end position="156"/>
    </location>
</feature>
<feature type="compositionally biased region" description="Low complexity" evidence="4">
    <location>
        <begin position="177"/>
        <end position="187"/>
    </location>
</feature>
<accession>Q86QH9</accession>
<comment type="function">
    <text evidence="1 2">Linker histones are implicated in chromatin remodeling and/or transcriptional regulation during spermiogenesis, the process of spermatid maturation into spermatozoa. Protamines substitute for histones in the chromatin of sperm during the haploid phase of spermatogenesis. They compact sperm DNA into a highly condensed, stable and inactive complex (By similarity).</text>
</comment>
<comment type="subcellular location">
    <subcellularLocation>
        <location evidence="3">Nucleus</location>
    </subcellularLocation>
    <subcellularLocation>
        <location evidence="3">Chromosome</location>
    </subcellularLocation>
</comment>
<comment type="tissue specificity">
    <text evidence="5">Sperm.</text>
</comment>
<comment type="PTM">
    <text evidence="5">OE1 and OE3 are produced by post-translational cleavage of a common precursor.</text>
</comment>
<name>H1L1_OSTED</name>
<protein>
    <recommendedName>
        <fullName>Sperm-specific H1/protamine-like protein type 1</fullName>
    </recommendedName>
    <component>
        <recommendedName>
            <fullName>Sperm-specific protein OE1</fullName>
        </recommendedName>
        <alternativeName>
            <fullName>Sperm-specific linker histone H1-like protein OE1</fullName>
        </alternativeName>
    </component>
    <component>
        <recommendedName>
            <fullName>Sperm-specific protein OE3</fullName>
        </recommendedName>
        <alternativeName>
            <fullName>Protamine-like OS3</fullName>
        </alternativeName>
    </component>
</protein>
<reference evidence="6" key="1">
    <citation type="journal article" date="2004" name="Biochim. Biophys. Acta">
        <title>The sperm-specific proteins of the edible oyster (European flat oyster (Ostrea edulis)) are products of proteolytic processing.</title>
        <authorList>
            <person name="Agelopoulou B."/>
            <person name="Cary P.D."/>
            <person name="Pataryas T."/>
            <person name="Aleporou-Marinou V."/>
            <person name="Crane-Robinson C."/>
        </authorList>
    </citation>
    <scope>NUCLEOTIDE SEQUENCE [GENOMIC DNA]</scope>
    <scope>TISSUE SPECIFICITY</scope>
    <source>
        <tissue evidence="7">Sperm</tissue>
    </source>
</reference>
<proteinExistence type="evidence at transcript level"/>
<organism evidence="7">
    <name type="scientific">Ostrea edulis</name>
    <name type="common">Native oyster</name>
    <name type="synonym">European flat oyster</name>
    <dbReference type="NCBI Taxonomy" id="37623"/>
    <lineage>
        <taxon>Eukaryota</taxon>
        <taxon>Metazoa</taxon>
        <taxon>Spiralia</taxon>
        <taxon>Lophotrochozoa</taxon>
        <taxon>Mollusca</taxon>
        <taxon>Bivalvia</taxon>
        <taxon>Autobranchia</taxon>
        <taxon>Pteriomorphia</taxon>
        <taxon>Ostreida</taxon>
        <taxon>Ostreoidea</taxon>
        <taxon>Ostreidae</taxon>
        <taxon>Ostrea</taxon>
    </lineage>
</organism>